<name>RL10E_SULAC</name>
<dbReference type="EMBL" id="CP000077">
    <property type="protein sequence ID" value="AAY79595.1"/>
    <property type="molecule type" value="Genomic_DNA"/>
</dbReference>
<dbReference type="RefSeq" id="WP_011277096.1">
    <property type="nucleotide sequence ID" value="NC_007181.1"/>
</dbReference>
<dbReference type="PDB" id="8HKU">
    <property type="method" value="EM"/>
    <property type="resolution" value="2.72 A"/>
    <property type="chains" value="L10E=4-167"/>
</dbReference>
<dbReference type="PDB" id="8HKV">
    <property type="method" value="EM"/>
    <property type="resolution" value="4.94 A"/>
    <property type="chains" value="L10E=4-167"/>
</dbReference>
<dbReference type="PDB" id="8HKY">
    <property type="method" value="EM"/>
    <property type="resolution" value="4.45 A"/>
    <property type="chains" value="L10E=4-167"/>
</dbReference>
<dbReference type="PDB" id="8HKZ">
    <property type="method" value="EM"/>
    <property type="resolution" value="4.78 A"/>
    <property type="chains" value="L10E=4-167"/>
</dbReference>
<dbReference type="PDB" id="8HL1">
    <property type="method" value="EM"/>
    <property type="resolution" value="3.93 A"/>
    <property type="chains" value="L10E=4-167"/>
</dbReference>
<dbReference type="PDB" id="8HL2">
    <property type="method" value="EM"/>
    <property type="resolution" value="4.10 A"/>
    <property type="chains" value="L10E=4-167"/>
</dbReference>
<dbReference type="PDB" id="8HL3">
    <property type="method" value="EM"/>
    <property type="resolution" value="4.80 A"/>
    <property type="chains" value="L10E=4-167"/>
</dbReference>
<dbReference type="PDB" id="8HL4">
    <property type="method" value="EM"/>
    <property type="resolution" value="4.62 A"/>
    <property type="chains" value="L10E=4-167"/>
</dbReference>
<dbReference type="PDB" id="8HL5">
    <property type="method" value="EM"/>
    <property type="resolution" value="5.72 A"/>
    <property type="chains" value="L10E=4-167"/>
</dbReference>
<dbReference type="PDBsum" id="8HKU"/>
<dbReference type="PDBsum" id="8HKV"/>
<dbReference type="PDBsum" id="8HKY"/>
<dbReference type="PDBsum" id="8HKZ"/>
<dbReference type="PDBsum" id="8HL1"/>
<dbReference type="PDBsum" id="8HL2"/>
<dbReference type="PDBsum" id="8HL3"/>
<dbReference type="PDBsum" id="8HL4"/>
<dbReference type="PDBsum" id="8HL5"/>
<dbReference type="EMDB" id="EMD-34860"/>
<dbReference type="EMDB" id="EMD-34861"/>
<dbReference type="EMDB" id="EMD-34863"/>
<dbReference type="EMDB" id="EMD-34864"/>
<dbReference type="EMDB" id="EMD-34866"/>
<dbReference type="EMDB" id="EMD-34867"/>
<dbReference type="EMDB" id="EMD-34868"/>
<dbReference type="EMDB" id="EMD-34869"/>
<dbReference type="EMDB" id="EMD-34870"/>
<dbReference type="SMR" id="Q4JC84"/>
<dbReference type="STRING" id="330779.Saci_0176"/>
<dbReference type="GeneID" id="14550703"/>
<dbReference type="KEGG" id="sai:Saci_0176"/>
<dbReference type="PATRIC" id="fig|330779.12.peg.167"/>
<dbReference type="eggNOG" id="arCOG04113">
    <property type="taxonomic scope" value="Archaea"/>
</dbReference>
<dbReference type="HOGENOM" id="CLU_084051_0_2_2"/>
<dbReference type="Proteomes" id="UP000001018">
    <property type="component" value="Chromosome"/>
</dbReference>
<dbReference type="GO" id="GO:1990904">
    <property type="term" value="C:ribonucleoprotein complex"/>
    <property type="evidence" value="ECO:0007669"/>
    <property type="project" value="UniProtKB-KW"/>
</dbReference>
<dbReference type="GO" id="GO:0005840">
    <property type="term" value="C:ribosome"/>
    <property type="evidence" value="ECO:0007669"/>
    <property type="project" value="UniProtKB-KW"/>
</dbReference>
<dbReference type="GO" id="GO:0003735">
    <property type="term" value="F:structural constituent of ribosome"/>
    <property type="evidence" value="ECO:0007669"/>
    <property type="project" value="InterPro"/>
</dbReference>
<dbReference type="GO" id="GO:0006412">
    <property type="term" value="P:translation"/>
    <property type="evidence" value="ECO:0007669"/>
    <property type="project" value="UniProtKB-UniRule"/>
</dbReference>
<dbReference type="CDD" id="cd01433">
    <property type="entry name" value="Ribosomal_L16_L10e"/>
    <property type="match status" value="1"/>
</dbReference>
<dbReference type="FunFam" id="3.90.1170.10:FF:000008">
    <property type="entry name" value="50S ribosomal protein L10e"/>
    <property type="match status" value="1"/>
</dbReference>
<dbReference type="Gene3D" id="3.90.1170.10">
    <property type="entry name" value="Ribosomal protein L10e/L16"/>
    <property type="match status" value="1"/>
</dbReference>
<dbReference type="HAMAP" id="MF_00448">
    <property type="entry name" value="Ribosomal_uL16_arch"/>
    <property type="match status" value="1"/>
</dbReference>
<dbReference type="InterPro" id="IPR047873">
    <property type="entry name" value="Ribosomal_uL16"/>
</dbReference>
<dbReference type="InterPro" id="IPR022981">
    <property type="entry name" value="Ribosomal_uL16_arc"/>
</dbReference>
<dbReference type="InterPro" id="IPR018255">
    <property type="entry name" value="Ribosomal_uL16_CS_euk_arc"/>
</dbReference>
<dbReference type="InterPro" id="IPR016180">
    <property type="entry name" value="Ribosomal_uL16_dom"/>
</dbReference>
<dbReference type="InterPro" id="IPR001197">
    <property type="entry name" value="Ribosomal_uL16_euk_arch"/>
</dbReference>
<dbReference type="InterPro" id="IPR036920">
    <property type="entry name" value="Ribosomal_uL16_sf"/>
</dbReference>
<dbReference type="NCBIfam" id="NF003236">
    <property type="entry name" value="PRK04199.1-1"/>
    <property type="match status" value="1"/>
</dbReference>
<dbReference type="NCBIfam" id="NF003239">
    <property type="entry name" value="PRK04199.1-4"/>
    <property type="match status" value="1"/>
</dbReference>
<dbReference type="PANTHER" id="PTHR11726">
    <property type="entry name" value="60S RIBOSOMAL PROTEIN L10"/>
    <property type="match status" value="1"/>
</dbReference>
<dbReference type="Pfam" id="PF00252">
    <property type="entry name" value="Ribosomal_L16"/>
    <property type="match status" value="1"/>
</dbReference>
<dbReference type="PIRSF" id="PIRSF005590">
    <property type="entry name" value="Ribosomal_L10"/>
    <property type="match status" value="1"/>
</dbReference>
<dbReference type="SUPFAM" id="SSF54686">
    <property type="entry name" value="Ribosomal protein L16p/L10e"/>
    <property type="match status" value="1"/>
</dbReference>
<dbReference type="PROSITE" id="PS01257">
    <property type="entry name" value="RIBOSOMAL_L10E"/>
    <property type="match status" value="1"/>
</dbReference>
<keyword id="KW-0002">3D-structure</keyword>
<keyword id="KW-1185">Reference proteome</keyword>
<keyword id="KW-0687">Ribonucleoprotein</keyword>
<keyword id="KW-0689">Ribosomal protein</keyword>
<reference key="1">
    <citation type="journal article" date="2005" name="J. Bacteriol.">
        <title>The genome of Sulfolobus acidocaldarius, a model organism of the Crenarchaeota.</title>
        <authorList>
            <person name="Chen L."/>
            <person name="Bruegger K."/>
            <person name="Skovgaard M."/>
            <person name="Redder P."/>
            <person name="She Q."/>
            <person name="Torarinsson E."/>
            <person name="Greve B."/>
            <person name="Awayez M."/>
            <person name="Zibat A."/>
            <person name="Klenk H.-P."/>
            <person name="Garrett R.A."/>
        </authorList>
    </citation>
    <scope>NUCLEOTIDE SEQUENCE [LARGE SCALE GENOMIC DNA]</scope>
    <source>
        <strain>ATCC 33909 / DSM 639 / JCM 8929 / NBRC 15157 / NCIMB 11770</strain>
    </source>
</reference>
<comment type="similarity">
    <text evidence="1">Belongs to the universal ribosomal protein uL16 family.</text>
</comment>
<organism>
    <name type="scientific">Sulfolobus acidocaldarius (strain ATCC 33909 / DSM 639 / JCM 8929 / NBRC 15157 / NCIMB 11770)</name>
    <dbReference type="NCBI Taxonomy" id="330779"/>
    <lineage>
        <taxon>Archaea</taxon>
        <taxon>Thermoproteota</taxon>
        <taxon>Thermoprotei</taxon>
        <taxon>Sulfolobales</taxon>
        <taxon>Sulfolobaceae</taxon>
        <taxon>Sulfolobus</taxon>
    </lineage>
</organism>
<proteinExistence type="evidence at protein level"/>
<gene>
    <name evidence="1" type="primary">rpl10e</name>
    <name type="ordered locus">Saci_0176</name>
</gene>
<evidence type="ECO:0000255" key="1">
    <source>
        <dbReference type="HAMAP-Rule" id="MF_00448"/>
    </source>
</evidence>
<evidence type="ECO:0000305" key="2"/>
<sequence length="176" mass="19873">MPLRPGRCYRKFSGPAYTRREYIPGIPMPKITKFVMGNVNGDYDYELRLITTEKGQIRHNALEAARVIALKYLSKKLASEQNFALVVTKYPHHVIRENKMMAFAGADRLQDGMRLSFGKPIGTAARLEKLGELVMYVRVKKEHLEAAKEALKIASSKLPIRTKIEISALNKEAAAQ</sequence>
<accession>Q4JC84</accession>
<protein>
    <recommendedName>
        <fullName evidence="1">Large ribosomal subunit protein uL16</fullName>
    </recommendedName>
    <alternativeName>
        <fullName evidence="2">50S ribosomal protein L10e</fullName>
    </alternativeName>
</protein>
<feature type="chain" id="PRO_0000147147" description="Large ribosomal subunit protein uL16">
    <location>
        <begin position="1"/>
        <end position="176"/>
    </location>
</feature>